<keyword id="KW-0013">ADP-ribosylation</keyword>
<keyword id="KW-1015">Disulfide bond</keyword>
<keyword id="KW-1040">Host Golgi apparatus</keyword>
<keyword id="KW-0597">Phosphoprotein</keyword>
<keyword id="KW-0687">Ribonucleoprotein</keyword>
<keyword id="KW-0694">RNA-binding</keyword>
<keyword id="KW-0804">Transcription</keyword>
<keyword id="KW-0805">Transcription regulation</keyword>
<keyword id="KW-0543">Viral nucleoprotein</keyword>
<keyword id="KW-0946">Virion</keyword>
<reference key="1">
    <citation type="submission" date="1996-03" db="EMBL/GenBank/DDBJ databases">
        <title>Nucleocapsid gene sequence analysis of several strains of infectious bronchitis virus describing the evolutionary relationship of IBV within the coronaviridae family.</title>
        <authorList>
            <person name="Williams A.K."/>
            <person name="Wang L."/>
            <person name="Sneed L.S."/>
            <person name="Collisson E.W."/>
        </authorList>
    </citation>
    <scope>NUCLEOTIDE SEQUENCE [GENOMIC RNA]</scope>
</reference>
<sequence>MASGKATGKTDAPAPVIKLGGPKPPKVGSSGNASWFQAIKAKKLNSHPPKFEGSGVPDNENLKTSQQHGYWRRQARFKPVKGGRKPVPDAWYFYYTGTGPAADLNWGDSQDGIVWVAAKGADVKSRSHQGTRDPDKFDQYPLRFSDGGPDGNFRWDFIPLNRGRSGRSTAASSAASSRAPSRDGSRGRRSGSEDDLIARAAKIIQDQQKKGSRITKVKADEMAHRRYCKRTIPPGYKVDQVFGPRTKGKEGNFGDDKMNEEGIKDGRVTAMLNLVPSSHACLFGSRVTPKLQPDGLHLKFEFTTVVPRDDPQFDNYVKICDQCVDGVGTRPKDDEPRPKSRSSSRPATRTSSPAPRQQRPKKEKKPKKQDDEVDKALTSNEERNNAQLEFDEEPKVINWGDSALGENEL</sequence>
<comment type="function">
    <text evidence="1">Packages the positive strand viral genome RNA into a helical ribonucleocapsid (RNP) and plays a fundamental role during virion assembly through its interactions with the viral genome and membrane protein M. Plays an important role in enhancing the efficiency of subgenomic viral RNA transcription as well as viral replication.</text>
</comment>
<comment type="subunit">
    <text evidence="1">Homooligomer. Both monomeric and oligomeric forms interact with RNA. Interacts with protein M. Interacts with NSP3; this interaction serves to tether the genome to the newly translated replicase-transcriptase complex at a very early stage of infection.</text>
</comment>
<comment type="subcellular location">
    <subcellularLocation>
        <location evidence="1">Virion</location>
    </subcellularLocation>
    <subcellularLocation>
        <location evidence="1">Host endoplasmic reticulum-Golgi intermediate compartment</location>
    </subcellularLocation>
    <subcellularLocation>
        <location evidence="1">Host Golgi apparatus</location>
    </subcellularLocation>
    <text evidence="1">Located inside the virion, complexed with the viral RNA. Probably associates with ER-derived membranes where it participates in viral RNA synthesis and virus budding.</text>
</comment>
<comment type="PTM">
    <text evidence="1">ADP-ribosylated. The ADP-ribosylation is retained in the virion during infection.</text>
</comment>
<comment type="PTM">
    <text evidence="1">Phosphorylated on serine and threonine residues.</text>
</comment>
<comment type="similarity">
    <text evidence="1">Belongs to the gammacoronavirus nucleocapsid protein family.</text>
</comment>
<protein>
    <recommendedName>
        <fullName evidence="1">Nucleoprotein</fullName>
    </recommendedName>
    <alternativeName>
        <fullName evidence="1">Nucleocapsid protein</fullName>
        <shortName evidence="1">NC</shortName>
        <shortName evidence="1">Protein N</shortName>
    </alternativeName>
</protein>
<gene>
    <name evidence="1" type="primary">N</name>
    <name type="ORF">6</name>
</gene>
<organism>
    <name type="scientific">Avian infectious bronchitis virus (strain Arkansas 99)</name>
    <name type="common">IBV</name>
    <dbReference type="NCBI Taxonomy" id="231471"/>
    <lineage>
        <taxon>Viruses</taxon>
        <taxon>Riboviria</taxon>
        <taxon>Orthornavirae</taxon>
        <taxon>Pisuviricota</taxon>
        <taxon>Pisoniviricetes</taxon>
        <taxon>Nidovirales</taxon>
        <taxon>Cornidovirineae</taxon>
        <taxon>Coronaviridae</taxon>
        <taxon>Orthocoronavirinae</taxon>
        <taxon>Gammacoronavirus</taxon>
        <taxon>Igacovirus</taxon>
        <taxon>Avian coronavirus</taxon>
    </lineage>
</organism>
<organismHost>
    <name type="scientific">Gallus gallus</name>
    <name type="common">Chicken</name>
    <dbReference type="NCBI Taxonomy" id="9031"/>
</organismHost>
<feature type="chain" id="PRO_0000105975" description="Nucleoprotein">
    <location>
        <begin position="1"/>
        <end position="409"/>
    </location>
</feature>
<feature type="domain" description="CoV N NTD" evidence="2">
    <location>
        <begin position="31"/>
        <end position="156"/>
    </location>
</feature>
<feature type="domain" description="CoV N CTD" evidence="3">
    <location>
        <begin position="219"/>
        <end position="331"/>
    </location>
</feature>
<feature type="region of interest" description="Disordered" evidence="4">
    <location>
        <begin position="1"/>
        <end position="32"/>
    </location>
</feature>
<feature type="region of interest" description="RNA-binding" evidence="1">
    <location>
        <begin position="29"/>
        <end position="160"/>
    </location>
</feature>
<feature type="region of interest" description="Disordered" evidence="4">
    <location>
        <begin position="45"/>
        <end position="69"/>
    </location>
</feature>
<feature type="region of interest" description="Disordered" evidence="4">
    <location>
        <begin position="122"/>
        <end position="145"/>
    </location>
</feature>
<feature type="region of interest" description="Disordered" evidence="4">
    <location>
        <begin position="164"/>
        <end position="194"/>
    </location>
</feature>
<feature type="region of interest" description="Dimerization" evidence="1">
    <location>
        <begin position="226"/>
        <end position="333"/>
    </location>
</feature>
<feature type="region of interest" description="Disordered" evidence="4">
    <location>
        <begin position="238"/>
        <end position="259"/>
    </location>
</feature>
<feature type="region of interest" description="Disordered" evidence="4">
    <location>
        <begin position="326"/>
        <end position="409"/>
    </location>
</feature>
<feature type="compositionally biased region" description="Low complexity" evidence="4">
    <location>
        <begin position="15"/>
        <end position="31"/>
    </location>
</feature>
<feature type="compositionally biased region" description="Basic and acidic residues" evidence="4">
    <location>
        <begin position="122"/>
        <end position="138"/>
    </location>
</feature>
<feature type="compositionally biased region" description="Low complexity" evidence="4">
    <location>
        <begin position="164"/>
        <end position="179"/>
    </location>
</feature>
<feature type="compositionally biased region" description="Basic and acidic residues" evidence="4">
    <location>
        <begin position="180"/>
        <end position="192"/>
    </location>
</feature>
<feature type="compositionally biased region" description="Basic and acidic residues" evidence="4">
    <location>
        <begin position="247"/>
        <end position="259"/>
    </location>
</feature>
<feature type="compositionally biased region" description="Low complexity" evidence="4">
    <location>
        <begin position="341"/>
        <end position="357"/>
    </location>
</feature>
<feature type="compositionally biased region" description="Basic residues" evidence="4">
    <location>
        <begin position="358"/>
        <end position="367"/>
    </location>
</feature>
<feature type="modified residue" description="Phosphoserine; by host" evidence="1">
    <location>
        <position position="190"/>
    </location>
</feature>
<feature type="modified residue" description="Phosphoserine; by host" evidence="1">
    <location>
        <position position="192"/>
    </location>
</feature>
<feature type="modified residue" description="Phosphothreonine; by host" evidence="1">
    <location>
        <position position="378"/>
    </location>
</feature>
<feature type="modified residue" description="Phosphoserine; by host" evidence="1">
    <location>
        <position position="379"/>
    </location>
</feature>
<feature type="disulfide bond" evidence="1">
    <location>
        <begin position="320"/>
        <end position="323"/>
    </location>
</feature>
<proteinExistence type="inferred from homology"/>
<accession>Q64960</accession>
<dbReference type="EMBL" id="M85244">
    <property type="protein sequence ID" value="AAA91855.1"/>
    <property type="molecule type" value="Genomic_RNA"/>
</dbReference>
<dbReference type="SMR" id="Q64960"/>
<dbReference type="GO" id="GO:0044172">
    <property type="term" value="C:host cell endoplasmic reticulum-Golgi intermediate compartment"/>
    <property type="evidence" value="ECO:0007669"/>
    <property type="project" value="UniProtKB-SubCell"/>
</dbReference>
<dbReference type="GO" id="GO:0044177">
    <property type="term" value="C:host cell Golgi apparatus"/>
    <property type="evidence" value="ECO:0007669"/>
    <property type="project" value="UniProtKB-SubCell"/>
</dbReference>
<dbReference type="GO" id="GO:1990904">
    <property type="term" value="C:ribonucleoprotein complex"/>
    <property type="evidence" value="ECO:0007669"/>
    <property type="project" value="UniProtKB-KW"/>
</dbReference>
<dbReference type="GO" id="GO:0019013">
    <property type="term" value="C:viral nucleocapsid"/>
    <property type="evidence" value="ECO:0007669"/>
    <property type="project" value="UniProtKB-UniRule"/>
</dbReference>
<dbReference type="GO" id="GO:0003723">
    <property type="term" value="F:RNA binding"/>
    <property type="evidence" value="ECO:0007669"/>
    <property type="project" value="UniProtKB-UniRule"/>
</dbReference>
<dbReference type="CDD" id="cd21595">
    <property type="entry name" value="CoV_N-CTD"/>
    <property type="match status" value="1"/>
</dbReference>
<dbReference type="CDD" id="cd21554">
    <property type="entry name" value="CoV_N-NTD"/>
    <property type="match status" value="1"/>
</dbReference>
<dbReference type="HAMAP" id="MF_04097">
    <property type="entry name" value="GAMMA_CORONA_NCAP"/>
    <property type="match status" value="1"/>
</dbReference>
<dbReference type="InterPro" id="IPR044344">
    <property type="entry name" value="N_prot_C_CoV"/>
</dbReference>
<dbReference type="InterPro" id="IPR044345">
    <property type="entry name" value="N_prot_N_CoV"/>
</dbReference>
<dbReference type="InterPro" id="IPR042547">
    <property type="entry name" value="NCAP_gCoV"/>
</dbReference>
<dbReference type="InterPro" id="IPR001218">
    <property type="entry name" value="Nucleocap_CoV"/>
</dbReference>
<dbReference type="InterPro" id="IPR037179">
    <property type="entry name" value="Nucleocapsid_C"/>
</dbReference>
<dbReference type="InterPro" id="IPR037195">
    <property type="entry name" value="Nucleocapsid_N"/>
</dbReference>
<dbReference type="Pfam" id="PF00937">
    <property type="entry name" value="CoV_nucleocap"/>
    <property type="match status" value="1"/>
</dbReference>
<dbReference type="PIRSF" id="PIRSF003888">
    <property type="entry name" value="Corona_nucleocap"/>
    <property type="match status" value="1"/>
</dbReference>
<dbReference type="SUPFAM" id="SSF110304">
    <property type="entry name" value="Coronavirus RNA-binding domain"/>
    <property type="match status" value="1"/>
</dbReference>
<dbReference type="SUPFAM" id="SSF103068">
    <property type="entry name" value="Nucleocapsid protein dimerization domain"/>
    <property type="match status" value="1"/>
</dbReference>
<dbReference type="PROSITE" id="PS51929">
    <property type="entry name" value="COV_N_CTD"/>
    <property type="match status" value="1"/>
</dbReference>
<dbReference type="PROSITE" id="PS51928">
    <property type="entry name" value="COV_N_NTD"/>
    <property type="match status" value="1"/>
</dbReference>
<evidence type="ECO:0000255" key="1">
    <source>
        <dbReference type="HAMAP-Rule" id="MF_04097"/>
    </source>
</evidence>
<evidence type="ECO:0000255" key="2">
    <source>
        <dbReference type="PROSITE-ProRule" id="PRU01276"/>
    </source>
</evidence>
<evidence type="ECO:0000255" key="3">
    <source>
        <dbReference type="PROSITE-ProRule" id="PRU01277"/>
    </source>
</evidence>
<evidence type="ECO:0000256" key="4">
    <source>
        <dbReference type="SAM" id="MobiDB-lite"/>
    </source>
</evidence>
<name>NCAP_IBVAR</name>